<dbReference type="EC" id="5.3.1.6" evidence="1"/>
<dbReference type="EMBL" id="CP001291">
    <property type="protein sequence ID" value="ACK69468.1"/>
    <property type="molecule type" value="Genomic_DNA"/>
</dbReference>
<dbReference type="RefSeq" id="WP_012598415.1">
    <property type="nucleotide sequence ID" value="NC_011729.1"/>
</dbReference>
<dbReference type="SMR" id="B7KIR2"/>
<dbReference type="STRING" id="65393.PCC7424_1014"/>
<dbReference type="KEGG" id="cyc:PCC7424_1014"/>
<dbReference type="eggNOG" id="COG0120">
    <property type="taxonomic scope" value="Bacteria"/>
</dbReference>
<dbReference type="HOGENOM" id="CLU_056590_1_1_3"/>
<dbReference type="OrthoDB" id="5870696at2"/>
<dbReference type="UniPathway" id="UPA00115">
    <property type="reaction ID" value="UER00412"/>
</dbReference>
<dbReference type="Proteomes" id="UP000002384">
    <property type="component" value="Chromosome"/>
</dbReference>
<dbReference type="GO" id="GO:0005829">
    <property type="term" value="C:cytosol"/>
    <property type="evidence" value="ECO:0007669"/>
    <property type="project" value="TreeGrafter"/>
</dbReference>
<dbReference type="GO" id="GO:0004751">
    <property type="term" value="F:ribose-5-phosphate isomerase activity"/>
    <property type="evidence" value="ECO:0007669"/>
    <property type="project" value="UniProtKB-UniRule"/>
</dbReference>
<dbReference type="GO" id="GO:0006014">
    <property type="term" value="P:D-ribose metabolic process"/>
    <property type="evidence" value="ECO:0007669"/>
    <property type="project" value="TreeGrafter"/>
</dbReference>
<dbReference type="GO" id="GO:0009052">
    <property type="term" value="P:pentose-phosphate shunt, non-oxidative branch"/>
    <property type="evidence" value="ECO:0007669"/>
    <property type="project" value="UniProtKB-UniRule"/>
</dbReference>
<dbReference type="CDD" id="cd01398">
    <property type="entry name" value="RPI_A"/>
    <property type="match status" value="1"/>
</dbReference>
<dbReference type="FunFam" id="3.30.70.260:FF:000018">
    <property type="entry name" value="Ribose-5-phosphate isomerase A"/>
    <property type="match status" value="1"/>
</dbReference>
<dbReference type="FunFam" id="3.40.50.1360:FF:000001">
    <property type="entry name" value="Ribose-5-phosphate isomerase A"/>
    <property type="match status" value="1"/>
</dbReference>
<dbReference type="Gene3D" id="3.30.70.260">
    <property type="match status" value="1"/>
</dbReference>
<dbReference type="Gene3D" id="3.40.50.1360">
    <property type="match status" value="1"/>
</dbReference>
<dbReference type="HAMAP" id="MF_00170">
    <property type="entry name" value="Rib_5P_isom_A"/>
    <property type="match status" value="1"/>
</dbReference>
<dbReference type="InterPro" id="IPR037171">
    <property type="entry name" value="NagB/RpiA_transferase-like"/>
</dbReference>
<dbReference type="InterPro" id="IPR020672">
    <property type="entry name" value="Ribose5P_isomerase_typA_subgr"/>
</dbReference>
<dbReference type="InterPro" id="IPR004788">
    <property type="entry name" value="Ribose5P_isomerase_type_A"/>
</dbReference>
<dbReference type="NCBIfam" id="NF001924">
    <property type="entry name" value="PRK00702.1"/>
    <property type="match status" value="1"/>
</dbReference>
<dbReference type="NCBIfam" id="TIGR00021">
    <property type="entry name" value="rpiA"/>
    <property type="match status" value="1"/>
</dbReference>
<dbReference type="PANTHER" id="PTHR11934">
    <property type="entry name" value="RIBOSE-5-PHOSPHATE ISOMERASE"/>
    <property type="match status" value="1"/>
</dbReference>
<dbReference type="PANTHER" id="PTHR11934:SF0">
    <property type="entry name" value="RIBOSE-5-PHOSPHATE ISOMERASE"/>
    <property type="match status" value="1"/>
</dbReference>
<dbReference type="Pfam" id="PF06026">
    <property type="entry name" value="Rib_5-P_isom_A"/>
    <property type="match status" value="1"/>
</dbReference>
<dbReference type="SUPFAM" id="SSF75445">
    <property type="entry name" value="D-ribose-5-phosphate isomerase (RpiA), lid domain"/>
    <property type="match status" value="1"/>
</dbReference>
<dbReference type="SUPFAM" id="SSF100950">
    <property type="entry name" value="NagB/RpiA/CoA transferase-like"/>
    <property type="match status" value="1"/>
</dbReference>
<protein>
    <recommendedName>
        <fullName evidence="1">Ribose-5-phosphate isomerase A</fullName>
        <ecNumber evidence="1">5.3.1.6</ecNumber>
    </recommendedName>
    <alternativeName>
        <fullName evidence="1">Phosphoriboisomerase A</fullName>
        <shortName evidence="1">PRI</shortName>
    </alternativeName>
</protein>
<organism>
    <name type="scientific">Gloeothece citriformis (strain PCC 7424)</name>
    <name type="common">Cyanothece sp. (strain PCC 7424)</name>
    <dbReference type="NCBI Taxonomy" id="65393"/>
    <lineage>
        <taxon>Bacteria</taxon>
        <taxon>Bacillati</taxon>
        <taxon>Cyanobacteriota</taxon>
        <taxon>Cyanophyceae</taxon>
        <taxon>Oscillatoriophycideae</taxon>
        <taxon>Chroococcales</taxon>
        <taxon>Aphanothecaceae</taxon>
        <taxon>Gloeothece</taxon>
        <taxon>Gloeothece citriformis</taxon>
    </lineage>
</organism>
<gene>
    <name evidence="1" type="primary">rpiA</name>
    <name type="ordered locus">PCC7424_1014</name>
</gene>
<name>RPIA_GLOC7</name>
<sequence>MTVTNDPVVLMKQEVGKAAAQRVHSDTIIGLGTGSTTAYAIQYIGERIQTGELKNVVGVPTSFGAEVLARKYGVPLTTLDVIDKMDLAIDGADEVDPQKNLIKGGGAAHTREKIVDSLADVFIVVVDSGKLVDKLGSTFLLPVEVIPMAVTPVIKALEKLGGKTDLRMGVKKAGPVVTDQGNLVIDVKFDNIEDPANLEKTINNIPGVLENGLFVGVADLILVGEIIDGKPRVREIS</sequence>
<feature type="chain" id="PRO_1000194698" description="Ribose-5-phosphate isomerase A">
    <location>
        <begin position="1"/>
        <end position="237"/>
    </location>
</feature>
<feature type="active site" description="Proton acceptor" evidence="1">
    <location>
        <position position="112"/>
    </location>
</feature>
<feature type="binding site" evidence="1">
    <location>
        <begin position="33"/>
        <end position="36"/>
    </location>
    <ligand>
        <name>substrate</name>
    </ligand>
</feature>
<feature type="binding site" evidence="1">
    <location>
        <begin position="90"/>
        <end position="93"/>
    </location>
    <ligand>
        <name>substrate</name>
    </ligand>
</feature>
<feature type="binding site" evidence="1">
    <location>
        <begin position="103"/>
        <end position="106"/>
    </location>
    <ligand>
        <name>substrate</name>
    </ligand>
</feature>
<feature type="binding site" evidence="1">
    <location>
        <position position="130"/>
    </location>
    <ligand>
        <name>substrate</name>
    </ligand>
</feature>
<keyword id="KW-0413">Isomerase</keyword>
<keyword id="KW-1185">Reference proteome</keyword>
<accession>B7KIR2</accession>
<proteinExistence type="inferred from homology"/>
<reference key="1">
    <citation type="journal article" date="2011" name="MBio">
        <title>Novel metabolic attributes of the genus Cyanothece, comprising a group of unicellular nitrogen-fixing Cyanobacteria.</title>
        <authorList>
            <person name="Bandyopadhyay A."/>
            <person name="Elvitigala T."/>
            <person name="Welsh E."/>
            <person name="Stockel J."/>
            <person name="Liberton M."/>
            <person name="Min H."/>
            <person name="Sherman L.A."/>
            <person name="Pakrasi H.B."/>
        </authorList>
    </citation>
    <scope>NUCLEOTIDE SEQUENCE [LARGE SCALE GENOMIC DNA]</scope>
    <source>
        <strain>PCC 7424</strain>
    </source>
</reference>
<comment type="function">
    <text evidence="1">Catalyzes the reversible conversion of ribose-5-phosphate to ribulose 5-phosphate.</text>
</comment>
<comment type="catalytic activity">
    <reaction evidence="1">
        <text>aldehydo-D-ribose 5-phosphate = D-ribulose 5-phosphate</text>
        <dbReference type="Rhea" id="RHEA:14657"/>
        <dbReference type="ChEBI" id="CHEBI:58121"/>
        <dbReference type="ChEBI" id="CHEBI:58273"/>
        <dbReference type="EC" id="5.3.1.6"/>
    </reaction>
</comment>
<comment type="pathway">
    <text evidence="1">Carbohydrate degradation; pentose phosphate pathway; D-ribose 5-phosphate from D-ribulose 5-phosphate (non-oxidative stage): step 1/1.</text>
</comment>
<comment type="subunit">
    <text evidence="1">Homodimer.</text>
</comment>
<comment type="similarity">
    <text evidence="1">Belongs to the ribose 5-phosphate isomerase family.</text>
</comment>
<evidence type="ECO:0000255" key="1">
    <source>
        <dbReference type="HAMAP-Rule" id="MF_00170"/>
    </source>
</evidence>